<proteinExistence type="inferred from homology"/>
<feature type="chain" id="PRO_1000098040" description="Serine--tRNA ligase">
    <location>
        <begin position="1"/>
        <end position="433"/>
    </location>
</feature>
<feature type="binding site" evidence="1">
    <location>
        <begin position="235"/>
        <end position="237"/>
    </location>
    <ligand>
        <name>L-serine</name>
        <dbReference type="ChEBI" id="CHEBI:33384"/>
    </ligand>
</feature>
<feature type="binding site" evidence="1">
    <location>
        <begin position="266"/>
        <end position="268"/>
    </location>
    <ligand>
        <name>ATP</name>
        <dbReference type="ChEBI" id="CHEBI:30616"/>
    </ligand>
</feature>
<feature type="binding site" evidence="1">
    <location>
        <position position="289"/>
    </location>
    <ligand>
        <name>L-serine</name>
        <dbReference type="ChEBI" id="CHEBI:33384"/>
    </ligand>
</feature>
<feature type="binding site" evidence="1">
    <location>
        <begin position="353"/>
        <end position="356"/>
    </location>
    <ligand>
        <name>ATP</name>
        <dbReference type="ChEBI" id="CHEBI:30616"/>
    </ligand>
</feature>
<feature type="binding site" evidence="1">
    <location>
        <position position="388"/>
    </location>
    <ligand>
        <name>L-serine</name>
        <dbReference type="ChEBI" id="CHEBI:33384"/>
    </ligand>
</feature>
<sequence length="433" mass="47559">MLDIQLLRKDLDGVAKRLADRGYTLDVAAFSALEAERRAIQTHTEELQARRNSLSKQIGAMKGKGEDTSAVMAEVSGIGDDMKASEAKLGEIQARLSDLMLGMPNVAHESVPVGKDEADNVEVRRWGTPRQFDFEVKDHVDVGTPLGLDFETGAKLAGARFTMLRGPIARLHRALAQFMIDTHTQQHGYTETYTPYIVNPEILYGTGQLPKFADDMFRVEKGGAENTVTQYLISTSEISLTNTVRESIVDGAALPIKLTAHSPCFRSEAGSYGRDTRGMIRQHQFDKVEMVQVVAPETSYAALDEMVGHAEAILQKLGLPYRVITLCTGDMGFSAAKTFDLEVWLPAQNTYREISSCSNTEAFQARRMQARFRNAQGKPELVHTLNGSGLAVGRTLVAVLENYQNADGSVTVPEVLRPYMGGMERIDAPAQTS</sequence>
<gene>
    <name evidence="1" type="primary">serS</name>
    <name type="ordered locus">BceJ2315_29760</name>
    <name type="ORF">BCAL3030</name>
</gene>
<accession>B4EBR4</accession>
<name>SYS_BURCJ</name>
<dbReference type="EC" id="6.1.1.11" evidence="1"/>
<dbReference type="EMBL" id="AM747720">
    <property type="protein sequence ID" value="CAR53352.1"/>
    <property type="molecule type" value="Genomic_DNA"/>
</dbReference>
<dbReference type="RefSeq" id="WP_006486625.1">
    <property type="nucleotide sequence ID" value="NC_011000.1"/>
</dbReference>
<dbReference type="SMR" id="B4EBR4"/>
<dbReference type="KEGG" id="bcj:BCAL3030"/>
<dbReference type="eggNOG" id="COG0172">
    <property type="taxonomic scope" value="Bacteria"/>
</dbReference>
<dbReference type="HOGENOM" id="CLU_023797_1_1_4"/>
<dbReference type="BioCyc" id="BCEN216591:G1G1V-3358-MONOMER"/>
<dbReference type="UniPathway" id="UPA00906">
    <property type="reaction ID" value="UER00895"/>
</dbReference>
<dbReference type="Proteomes" id="UP000001035">
    <property type="component" value="Chromosome 1"/>
</dbReference>
<dbReference type="GO" id="GO:0005737">
    <property type="term" value="C:cytoplasm"/>
    <property type="evidence" value="ECO:0007669"/>
    <property type="project" value="UniProtKB-SubCell"/>
</dbReference>
<dbReference type="GO" id="GO:0005524">
    <property type="term" value="F:ATP binding"/>
    <property type="evidence" value="ECO:0007669"/>
    <property type="project" value="UniProtKB-UniRule"/>
</dbReference>
<dbReference type="GO" id="GO:0004828">
    <property type="term" value="F:serine-tRNA ligase activity"/>
    <property type="evidence" value="ECO:0007669"/>
    <property type="project" value="UniProtKB-UniRule"/>
</dbReference>
<dbReference type="GO" id="GO:0016260">
    <property type="term" value="P:selenocysteine biosynthetic process"/>
    <property type="evidence" value="ECO:0007669"/>
    <property type="project" value="UniProtKB-UniRule"/>
</dbReference>
<dbReference type="GO" id="GO:0006434">
    <property type="term" value="P:seryl-tRNA aminoacylation"/>
    <property type="evidence" value="ECO:0007669"/>
    <property type="project" value="UniProtKB-UniRule"/>
</dbReference>
<dbReference type="CDD" id="cd00770">
    <property type="entry name" value="SerRS_core"/>
    <property type="match status" value="1"/>
</dbReference>
<dbReference type="Gene3D" id="3.30.930.10">
    <property type="entry name" value="Bira Bifunctional Protein, Domain 2"/>
    <property type="match status" value="1"/>
</dbReference>
<dbReference type="Gene3D" id="1.10.287.40">
    <property type="entry name" value="Serine-tRNA synthetase, tRNA binding domain"/>
    <property type="match status" value="1"/>
</dbReference>
<dbReference type="HAMAP" id="MF_00176">
    <property type="entry name" value="Ser_tRNA_synth_type1"/>
    <property type="match status" value="1"/>
</dbReference>
<dbReference type="InterPro" id="IPR002314">
    <property type="entry name" value="aa-tRNA-synt_IIb"/>
</dbReference>
<dbReference type="InterPro" id="IPR006195">
    <property type="entry name" value="aa-tRNA-synth_II"/>
</dbReference>
<dbReference type="InterPro" id="IPR045864">
    <property type="entry name" value="aa-tRNA-synth_II/BPL/LPL"/>
</dbReference>
<dbReference type="InterPro" id="IPR002317">
    <property type="entry name" value="Ser-tRNA-ligase_type_1"/>
</dbReference>
<dbReference type="InterPro" id="IPR015866">
    <property type="entry name" value="Ser-tRNA-synth_1_N"/>
</dbReference>
<dbReference type="InterPro" id="IPR042103">
    <property type="entry name" value="SerRS_1_N_sf"/>
</dbReference>
<dbReference type="InterPro" id="IPR033729">
    <property type="entry name" value="SerRS_core"/>
</dbReference>
<dbReference type="InterPro" id="IPR010978">
    <property type="entry name" value="tRNA-bd_arm"/>
</dbReference>
<dbReference type="NCBIfam" id="TIGR00414">
    <property type="entry name" value="serS"/>
    <property type="match status" value="1"/>
</dbReference>
<dbReference type="PANTHER" id="PTHR43697:SF1">
    <property type="entry name" value="SERINE--TRNA LIGASE"/>
    <property type="match status" value="1"/>
</dbReference>
<dbReference type="PANTHER" id="PTHR43697">
    <property type="entry name" value="SERYL-TRNA SYNTHETASE"/>
    <property type="match status" value="1"/>
</dbReference>
<dbReference type="Pfam" id="PF02403">
    <property type="entry name" value="Seryl_tRNA_N"/>
    <property type="match status" value="1"/>
</dbReference>
<dbReference type="Pfam" id="PF00587">
    <property type="entry name" value="tRNA-synt_2b"/>
    <property type="match status" value="1"/>
</dbReference>
<dbReference type="PIRSF" id="PIRSF001529">
    <property type="entry name" value="Ser-tRNA-synth_IIa"/>
    <property type="match status" value="1"/>
</dbReference>
<dbReference type="PRINTS" id="PR00981">
    <property type="entry name" value="TRNASYNTHSER"/>
</dbReference>
<dbReference type="SUPFAM" id="SSF55681">
    <property type="entry name" value="Class II aaRS and biotin synthetases"/>
    <property type="match status" value="1"/>
</dbReference>
<dbReference type="SUPFAM" id="SSF46589">
    <property type="entry name" value="tRNA-binding arm"/>
    <property type="match status" value="1"/>
</dbReference>
<dbReference type="PROSITE" id="PS50862">
    <property type="entry name" value="AA_TRNA_LIGASE_II"/>
    <property type="match status" value="1"/>
</dbReference>
<keyword id="KW-0030">Aminoacyl-tRNA synthetase</keyword>
<keyword id="KW-0067">ATP-binding</keyword>
<keyword id="KW-0963">Cytoplasm</keyword>
<keyword id="KW-0436">Ligase</keyword>
<keyword id="KW-0547">Nucleotide-binding</keyword>
<keyword id="KW-0648">Protein biosynthesis</keyword>
<organism>
    <name type="scientific">Burkholderia cenocepacia (strain ATCC BAA-245 / DSM 16553 / LMG 16656 / NCTC 13227 / J2315 / CF5610)</name>
    <name type="common">Burkholderia cepacia (strain J2315)</name>
    <dbReference type="NCBI Taxonomy" id="216591"/>
    <lineage>
        <taxon>Bacteria</taxon>
        <taxon>Pseudomonadati</taxon>
        <taxon>Pseudomonadota</taxon>
        <taxon>Betaproteobacteria</taxon>
        <taxon>Burkholderiales</taxon>
        <taxon>Burkholderiaceae</taxon>
        <taxon>Burkholderia</taxon>
        <taxon>Burkholderia cepacia complex</taxon>
    </lineage>
</organism>
<evidence type="ECO:0000255" key="1">
    <source>
        <dbReference type="HAMAP-Rule" id="MF_00176"/>
    </source>
</evidence>
<comment type="function">
    <text evidence="1">Catalyzes the attachment of serine to tRNA(Ser). Is also able to aminoacylate tRNA(Sec) with serine, to form the misacylated tRNA L-seryl-tRNA(Sec), which will be further converted into selenocysteinyl-tRNA(Sec).</text>
</comment>
<comment type="catalytic activity">
    <reaction evidence="1">
        <text>tRNA(Ser) + L-serine + ATP = L-seryl-tRNA(Ser) + AMP + diphosphate + H(+)</text>
        <dbReference type="Rhea" id="RHEA:12292"/>
        <dbReference type="Rhea" id="RHEA-COMP:9669"/>
        <dbReference type="Rhea" id="RHEA-COMP:9703"/>
        <dbReference type="ChEBI" id="CHEBI:15378"/>
        <dbReference type="ChEBI" id="CHEBI:30616"/>
        <dbReference type="ChEBI" id="CHEBI:33019"/>
        <dbReference type="ChEBI" id="CHEBI:33384"/>
        <dbReference type="ChEBI" id="CHEBI:78442"/>
        <dbReference type="ChEBI" id="CHEBI:78533"/>
        <dbReference type="ChEBI" id="CHEBI:456215"/>
        <dbReference type="EC" id="6.1.1.11"/>
    </reaction>
</comment>
<comment type="catalytic activity">
    <reaction evidence="1">
        <text>tRNA(Sec) + L-serine + ATP = L-seryl-tRNA(Sec) + AMP + diphosphate + H(+)</text>
        <dbReference type="Rhea" id="RHEA:42580"/>
        <dbReference type="Rhea" id="RHEA-COMP:9742"/>
        <dbReference type="Rhea" id="RHEA-COMP:10128"/>
        <dbReference type="ChEBI" id="CHEBI:15378"/>
        <dbReference type="ChEBI" id="CHEBI:30616"/>
        <dbReference type="ChEBI" id="CHEBI:33019"/>
        <dbReference type="ChEBI" id="CHEBI:33384"/>
        <dbReference type="ChEBI" id="CHEBI:78442"/>
        <dbReference type="ChEBI" id="CHEBI:78533"/>
        <dbReference type="ChEBI" id="CHEBI:456215"/>
        <dbReference type="EC" id="6.1.1.11"/>
    </reaction>
</comment>
<comment type="pathway">
    <text evidence="1">Aminoacyl-tRNA biosynthesis; selenocysteinyl-tRNA(Sec) biosynthesis; L-seryl-tRNA(Sec) from L-serine and tRNA(Sec): step 1/1.</text>
</comment>
<comment type="subunit">
    <text evidence="1">Homodimer. The tRNA molecule binds across the dimer.</text>
</comment>
<comment type="subcellular location">
    <subcellularLocation>
        <location evidence="1">Cytoplasm</location>
    </subcellularLocation>
</comment>
<comment type="domain">
    <text evidence="1">Consists of two distinct domains, a catalytic core and a N-terminal extension that is involved in tRNA binding.</text>
</comment>
<comment type="similarity">
    <text evidence="1">Belongs to the class-II aminoacyl-tRNA synthetase family. Type-1 seryl-tRNA synthetase subfamily.</text>
</comment>
<reference key="1">
    <citation type="journal article" date="2009" name="J. Bacteriol.">
        <title>The genome of Burkholderia cenocepacia J2315, an epidemic pathogen of cystic fibrosis patients.</title>
        <authorList>
            <person name="Holden M.T."/>
            <person name="Seth-Smith H.M."/>
            <person name="Crossman L.C."/>
            <person name="Sebaihia M."/>
            <person name="Bentley S.D."/>
            <person name="Cerdeno-Tarraga A.M."/>
            <person name="Thomson N.R."/>
            <person name="Bason N."/>
            <person name="Quail M.A."/>
            <person name="Sharp S."/>
            <person name="Cherevach I."/>
            <person name="Churcher C."/>
            <person name="Goodhead I."/>
            <person name="Hauser H."/>
            <person name="Holroyd N."/>
            <person name="Mungall K."/>
            <person name="Scott P."/>
            <person name="Walker D."/>
            <person name="White B."/>
            <person name="Rose H."/>
            <person name="Iversen P."/>
            <person name="Mil-Homens D."/>
            <person name="Rocha E.P."/>
            <person name="Fialho A.M."/>
            <person name="Baldwin A."/>
            <person name="Dowson C."/>
            <person name="Barrell B.G."/>
            <person name="Govan J.R."/>
            <person name="Vandamme P."/>
            <person name="Hart C.A."/>
            <person name="Mahenthiralingam E."/>
            <person name="Parkhill J."/>
        </authorList>
    </citation>
    <scope>NUCLEOTIDE SEQUENCE [LARGE SCALE GENOMIC DNA]</scope>
    <source>
        <strain>ATCC BAA-245 / DSM 16553 / LMG 16656 / NCTC 13227 / J2315 / CF5610</strain>
    </source>
</reference>
<protein>
    <recommendedName>
        <fullName evidence="1">Serine--tRNA ligase</fullName>
        <ecNumber evidence="1">6.1.1.11</ecNumber>
    </recommendedName>
    <alternativeName>
        <fullName evidence="1">Seryl-tRNA synthetase</fullName>
        <shortName evidence="1">SerRS</shortName>
    </alternativeName>
    <alternativeName>
        <fullName evidence="1">Seryl-tRNA(Ser/Sec) synthetase</fullName>
    </alternativeName>
</protein>